<feature type="chain" id="PRO_1000073818" description="Argininosuccinate synthase">
    <location>
        <begin position="1"/>
        <end position="406"/>
    </location>
</feature>
<feature type="binding site" evidence="1">
    <location>
        <begin position="8"/>
        <end position="16"/>
    </location>
    <ligand>
        <name>ATP</name>
        <dbReference type="ChEBI" id="CHEBI:30616"/>
    </ligand>
</feature>
<feature type="binding site" evidence="1">
    <location>
        <position position="86"/>
    </location>
    <ligand>
        <name>L-citrulline</name>
        <dbReference type="ChEBI" id="CHEBI:57743"/>
    </ligand>
</feature>
<feature type="binding site" evidence="1">
    <location>
        <position position="116"/>
    </location>
    <ligand>
        <name>ATP</name>
        <dbReference type="ChEBI" id="CHEBI:30616"/>
    </ligand>
</feature>
<feature type="binding site" evidence="1">
    <location>
        <position position="118"/>
    </location>
    <ligand>
        <name>L-aspartate</name>
        <dbReference type="ChEBI" id="CHEBI:29991"/>
    </ligand>
</feature>
<feature type="binding site" evidence="1">
    <location>
        <position position="122"/>
    </location>
    <ligand>
        <name>L-aspartate</name>
        <dbReference type="ChEBI" id="CHEBI:29991"/>
    </ligand>
</feature>
<feature type="binding site" evidence="1">
    <location>
        <position position="122"/>
    </location>
    <ligand>
        <name>L-citrulline</name>
        <dbReference type="ChEBI" id="CHEBI:57743"/>
    </ligand>
</feature>
<feature type="binding site" evidence="1">
    <location>
        <position position="123"/>
    </location>
    <ligand>
        <name>L-aspartate</name>
        <dbReference type="ChEBI" id="CHEBI:29991"/>
    </ligand>
</feature>
<feature type="binding site" evidence="1">
    <location>
        <position position="126"/>
    </location>
    <ligand>
        <name>L-citrulline</name>
        <dbReference type="ChEBI" id="CHEBI:57743"/>
    </ligand>
</feature>
<feature type="binding site" evidence="1">
    <location>
        <position position="174"/>
    </location>
    <ligand>
        <name>L-citrulline</name>
        <dbReference type="ChEBI" id="CHEBI:57743"/>
    </ligand>
</feature>
<feature type="binding site" evidence="1">
    <location>
        <position position="183"/>
    </location>
    <ligand>
        <name>L-citrulline</name>
        <dbReference type="ChEBI" id="CHEBI:57743"/>
    </ligand>
</feature>
<feature type="binding site" evidence="1">
    <location>
        <position position="259"/>
    </location>
    <ligand>
        <name>L-citrulline</name>
        <dbReference type="ChEBI" id="CHEBI:57743"/>
    </ligand>
</feature>
<feature type="binding site" evidence="1">
    <location>
        <position position="271"/>
    </location>
    <ligand>
        <name>L-citrulline</name>
        <dbReference type="ChEBI" id="CHEBI:57743"/>
    </ligand>
</feature>
<gene>
    <name evidence="1" type="primary">argG</name>
    <name type="ordered locus">DehaBAV1_1071</name>
</gene>
<protein>
    <recommendedName>
        <fullName evidence="1">Argininosuccinate synthase</fullName>
        <ecNumber evidence="1">6.3.4.5</ecNumber>
    </recommendedName>
    <alternativeName>
        <fullName evidence="1">Citrulline--aspartate ligase</fullName>
    </alternativeName>
</protein>
<comment type="catalytic activity">
    <reaction evidence="1">
        <text>L-citrulline + L-aspartate + ATP = 2-(N(omega)-L-arginino)succinate + AMP + diphosphate + H(+)</text>
        <dbReference type="Rhea" id="RHEA:10932"/>
        <dbReference type="ChEBI" id="CHEBI:15378"/>
        <dbReference type="ChEBI" id="CHEBI:29991"/>
        <dbReference type="ChEBI" id="CHEBI:30616"/>
        <dbReference type="ChEBI" id="CHEBI:33019"/>
        <dbReference type="ChEBI" id="CHEBI:57472"/>
        <dbReference type="ChEBI" id="CHEBI:57743"/>
        <dbReference type="ChEBI" id="CHEBI:456215"/>
        <dbReference type="EC" id="6.3.4.5"/>
    </reaction>
</comment>
<comment type="pathway">
    <text evidence="1">Amino-acid biosynthesis; L-arginine biosynthesis; L-arginine from L-ornithine and carbamoyl phosphate: step 2/3.</text>
</comment>
<comment type="subunit">
    <text evidence="1">Homotetramer.</text>
</comment>
<comment type="subcellular location">
    <subcellularLocation>
        <location evidence="1">Cytoplasm</location>
    </subcellularLocation>
</comment>
<comment type="similarity">
    <text evidence="1">Belongs to the argininosuccinate synthase family. Type 1 subfamily.</text>
</comment>
<reference key="1">
    <citation type="submission" date="2007-05" db="EMBL/GenBank/DDBJ databases">
        <title>Complete sequence of Dehalococcoides sp. BAV1.</title>
        <authorList>
            <consortium name="US DOE Joint Genome Institute"/>
            <person name="Copeland A."/>
            <person name="Lucas S."/>
            <person name="Lapidus A."/>
            <person name="Barry K."/>
            <person name="Detter J.C."/>
            <person name="Glavina del Rio T."/>
            <person name="Hammon N."/>
            <person name="Israni S."/>
            <person name="Pitluck S."/>
            <person name="Lowry S."/>
            <person name="Clum A."/>
            <person name="Schmutz J."/>
            <person name="Larimer F."/>
            <person name="Land M."/>
            <person name="Hauser L."/>
            <person name="Kyrpides N."/>
            <person name="Kim E."/>
            <person name="Ritalahti K.M."/>
            <person name="Loeffler F."/>
            <person name="Richardson P."/>
        </authorList>
    </citation>
    <scope>NUCLEOTIDE SEQUENCE [LARGE SCALE GENOMIC DNA]</scope>
    <source>
        <strain>ATCC BAA-2100 / JCM 16839 / KCTC 5957 / BAV1</strain>
    </source>
</reference>
<sequence>MSEKVVLAYSGGLDTSAAVKWLQEKYGMDVIAVTIDVGNEKDFTLIKEKALKVGAKKAYVRDVRKEFAEDYIWKAIKANSMYEGVYPLATALARPLIAKVMVDIALEEGATAIAHGCTGKGNDQVRFDVGINTLAPHLKIIAPARQWGMTREQTMEYAQKWGIPVPISVKNPFSIDENLWGRSIECGLLEDPWNEPIPEVFAWTRPVEETPDEPEYLEVEFEQGVPVAVNGEKLSPLALIQKVHDIASLHGVGRIDHVENRLVGIKSREIYEAPAAVVLIAAHQALEAMTLSKSQLRFKQMVEATYSDIIYNGLWFSALRQDLDAFIDSSQRFVSGTVRLKLSKGSFRVVGRKSPYSLYHKGMATYDKGDQFDPSSAVGFITLWGLQAKLQAQLQPILEEEKGNKS</sequence>
<evidence type="ECO:0000255" key="1">
    <source>
        <dbReference type="HAMAP-Rule" id="MF_00005"/>
    </source>
</evidence>
<proteinExistence type="inferred from homology"/>
<accession>A5FQ73</accession>
<keyword id="KW-0028">Amino-acid biosynthesis</keyword>
<keyword id="KW-0055">Arginine biosynthesis</keyword>
<keyword id="KW-0067">ATP-binding</keyword>
<keyword id="KW-0963">Cytoplasm</keyword>
<keyword id="KW-0436">Ligase</keyword>
<keyword id="KW-0547">Nucleotide-binding</keyword>
<name>ASSY_DEHMB</name>
<dbReference type="EC" id="6.3.4.5" evidence="1"/>
<dbReference type="EMBL" id="CP000688">
    <property type="protein sequence ID" value="ABQ17651.1"/>
    <property type="molecule type" value="Genomic_DNA"/>
</dbReference>
<dbReference type="SMR" id="A5FQ73"/>
<dbReference type="KEGG" id="deb:DehaBAV1_1071"/>
<dbReference type="PATRIC" id="fig|216389.18.peg.1133"/>
<dbReference type="HOGENOM" id="CLU_032784_4_2_0"/>
<dbReference type="UniPathway" id="UPA00068">
    <property type="reaction ID" value="UER00113"/>
</dbReference>
<dbReference type="GO" id="GO:0005737">
    <property type="term" value="C:cytoplasm"/>
    <property type="evidence" value="ECO:0007669"/>
    <property type="project" value="UniProtKB-SubCell"/>
</dbReference>
<dbReference type="GO" id="GO:0004055">
    <property type="term" value="F:argininosuccinate synthase activity"/>
    <property type="evidence" value="ECO:0007669"/>
    <property type="project" value="UniProtKB-UniRule"/>
</dbReference>
<dbReference type="GO" id="GO:0005524">
    <property type="term" value="F:ATP binding"/>
    <property type="evidence" value="ECO:0007669"/>
    <property type="project" value="UniProtKB-UniRule"/>
</dbReference>
<dbReference type="GO" id="GO:0000053">
    <property type="term" value="P:argininosuccinate metabolic process"/>
    <property type="evidence" value="ECO:0007669"/>
    <property type="project" value="TreeGrafter"/>
</dbReference>
<dbReference type="GO" id="GO:0006526">
    <property type="term" value="P:L-arginine biosynthetic process"/>
    <property type="evidence" value="ECO:0007669"/>
    <property type="project" value="UniProtKB-UniRule"/>
</dbReference>
<dbReference type="GO" id="GO:0000050">
    <property type="term" value="P:urea cycle"/>
    <property type="evidence" value="ECO:0007669"/>
    <property type="project" value="TreeGrafter"/>
</dbReference>
<dbReference type="CDD" id="cd01999">
    <property type="entry name" value="ASS"/>
    <property type="match status" value="1"/>
</dbReference>
<dbReference type="FunFam" id="3.40.50.620:FF:000019">
    <property type="entry name" value="Argininosuccinate synthase"/>
    <property type="match status" value="1"/>
</dbReference>
<dbReference type="FunFam" id="3.90.1260.10:FF:000007">
    <property type="entry name" value="Argininosuccinate synthase"/>
    <property type="match status" value="1"/>
</dbReference>
<dbReference type="Gene3D" id="3.90.1260.10">
    <property type="entry name" value="Argininosuccinate synthetase, chain A, domain 2"/>
    <property type="match status" value="1"/>
</dbReference>
<dbReference type="Gene3D" id="3.40.50.620">
    <property type="entry name" value="HUPs"/>
    <property type="match status" value="1"/>
</dbReference>
<dbReference type="Gene3D" id="1.20.5.470">
    <property type="entry name" value="Single helix bin"/>
    <property type="match status" value="1"/>
</dbReference>
<dbReference type="HAMAP" id="MF_00005">
    <property type="entry name" value="Arg_succ_synth_type1"/>
    <property type="match status" value="1"/>
</dbReference>
<dbReference type="InterPro" id="IPR048268">
    <property type="entry name" value="Arginosuc_syn_C"/>
</dbReference>
<dbReference type="InterPro" id="IPR048267">
    <property type="entry name" value="Arginosuc_syn_N"/>
</dbReference>
<dbReference type="InterPro" id="IPR001518">
    <property type="entry name" value="Arginosuc_synth"/>
</dbReference>
<dbReference type="InterPro" id="IPR018223">
    <property type="entry name" value="Arginosuc_synth_CS"/>
</dbReference>
<dbReference type="InterPro" id="IPR023434">
    <property type="entry name" value="Arginosuc_synth_type_1_subfam"/>
</dbReference>
<dbReference type="InterPro" id="IPR024074">
    <property type="entry name" value="AS_cat/multimer_dom_body"/>
</dbReference>
<dbReference type="InterPro" id="IPR014729">
    <property type="entry name" value="Rossmann-like_a/b/a_fold"/>
</dbReference>
<dbReference type="NCBIfam" id="TIGR00032">
    <property type="entry name" value="argG"/>
    <property type="match status" value="1"/>
</dbReference>
<dbReference type="NCBIfam" id="NF001770">
    <property type="entry name" value="PRK00509.1"/>
    <property type="match status" value="1"/>
</dbReference>
<dbReference type="PANTHER" id="PTHR11587">
    <property type="entry name" value="ARGININOSUCCINATE SYNTHASE"/>
    <property type="match status" value="1"/>
</dbReference>
<dbReference type="PANTHER" id="PTHR11587:SF2">
    <property type="entry name" value="ARGININOSUCCINATE SYNTHASE"/>
    <property type="match status" value="1"/>
</dbReference>
<dbReference type="Pfam" id="PF20979">
    <property type="entry name" value="Arginosuc_syn_C"/>
    <property type="match status" value="1"/>
</dbReference>
<dbReference type="Pfam" id="PF00764">
    <property type="entry name" value="Arginosuc_synth"/>
    <property type="match status" value="1"/>
</dbReference>
<dbReference type="SUPFAM" id="SSF52402">
    <property type="entry name" value="Adenine nucleotide alpha hydrolases-like"/>
    <property type="match status" value="1"/>
</dbReference>
<dbReference type="SUPFAM" id="SSF69864">
    <property type="entry name" value="Argininosuccinate synthetase, C-terminal domain"/>
    <property type="match status" value="1"/>
</dbReference>
<dbReference type="PROSITE" id="PS00564">
    <property type="entry name" value="ARGININOSUCCIN_SYN_1"/>
    <property type="match status" value="1"/>
</dbReference>
<dbReference type="PROSITE" id="PS00565">
    <property type="entry name" value="ARGININOSUCCIN_SYN_2"/>
    <property type="match status" value="1"/>
</dbReference>
<organism>
    <name type="scientific">Dehalococcoides mccartyi (strain ATCC BAA-2100 / JCM 16839 / KCTC 5957 / BAV1)</name>
    <dbReference type="NCBI Taxonomy" id="216389"/>
    <lineage>
        <taxon>Bacteria</taxon>
        <taxon>Bacillati</taxon>
        <taxon>Chloroflexota</taxon>
        <taxon>Dehalococcoidia</taxon>
        <taxon>Dehalococcoidales</taxon>
        <taxon>Dehalococcoidaceae</taxon>
        <taxon>Dehalococcoides</taxon>
    </lineage>
</organism>